<gene>
    <name evidence="1" type="primary">mraZ</name>
    <name type="ordered locus">Dtpsy_2989</name>
</gene>
<organism>
    <name type="scientific">Acidovorax ebreus (strain TPSY)</name>
    <name type="common">Diaphorobacter sp. (strain TPSY)</name>
    <dbReference type="NCBI Taxonomy" id="535289"/>
    <lineage>
        <taxon>Bacteria</taxon>
        <taxon>Pseudomonadati</taxon>
        <taxon>Pseudomonadota</taxon>
        <taxon>Betaproteobacteria</taxon>
        <taxon>Burkholderiales</taxon>
        <taxon>Comamonadaceae</taxon>
        <taxon>Diaphorobacter</taxon>
    </lineage>
</organism>
<dbReference type="EMBL" id="CP001392">
    <property type="protein sequence ID" value="ACM34422.1"/>
    <property type="molecule type" value="Genomic_DNA"/>
</dbReference>
<dbReference type="RefSeq" id="WP_011806773.1">
    <property type="nucleotide sequence ID" value="NC_011992.1"/>
</dbReference>
<dbReference type="SMR" id="B9MFS1"/>
<dbReference type="GeneID" id="84683994"/>
<dbReference type="KEGG" id="dia:Dtpsy_2989"/>
<dbReference type="eggNOG" id="COG2001">
    <property type="taxonomic scope" value="Bacteria"/>
</dbReference>
<dbReference type="HOGENOM" id="CLU_107907_2_1_4"/>
<dbReference type="Proteomes" id="UP000000450">
    <property type="component" value="Chromosome"/>
</dbReference>
<dbReference type="GO" id="GO:0005737">
    <property type="term" value="C:cytoplasm"/>
    <property type="evidence" value="ECO:0007669"/>
    <property type="project" value="UniProtKB-UniRule"/>
</dbReference>
<dbReference type="GO" id="GO:0009295">
    <property type="term" value="C:nucleoid"/>
    <property type="evidence" value="ECO:0007669"/>
    <property type="project" value="UniProtKB-SubCell"/>
</dbReference>
<dbReference type="GO" id="GO:0003700">
    <property type="term" value="F:DNA-binding transcription factor activity"/>
    <property type="evidence" value="ECO:0007669"/>
    <property type="project" value="UniProtKB-UniRule"/>
</dbReference>
<dbReference type="GO" id="GO:0000976">
    <property type="term" value="F:transcription cis-regulatory region binding"/>
    <property type="evidence" value="ECO:0007669"/>
    <property type="project" value="TreeGrafter"/>
</dbReference>
<dbReference type="GO" id="GO:2000143">
    <property type="term" value="P:negative regulation of DNA-templated transcription initiation"/>
    <property type="evidence" value="ECO:0007669"/>
    <property type="project" value="TreeGrafter"/>
</dbReference>
<dbReference type="CDD" id="cd16321">
    <property type="entry name" value="MraZ_C"/>
    <property type="match status" value="1"/>
</dbReference>
<dbReference type="CDD" id="cd16320">
    <property type="entry name" value="MraZ_N"/>
    <property type="match status" value="1"/>
</dbReference>
<dbReference type="Gene3D" id="3.40.1550.20">
    <property type="entry name" value="Transcriptional regulator MraZ domain"/>
    <property type="match status" value="1"/>
</dbReference>
<dbReference type="HAMAP" id="MF_01008">
    <property type="entry name" value="MraZ"/>
    <property type="match status" value="1"/>
</dbReference>
<dbReference type="InterPro" id="IPR003444">
    <property type="entry name" value="MraZ"/>
</dbReference>
<dbReference type="InterPro" id="IPR035644">
    <property type="entry name" value="MraZ_C"/>
</dbReference>
<dbReference type="InterPro" id="IPR020603">
    <property type="entry name" value="MraZ_dom"/>
</dbReference>
<dbReference type="InterPro" id="IPR035642">
    <property type="entry name" value="MraZ_N"/>
</dbReference>
<dbReference type="InterPro" id="IPR038619">
    <property type="entry name" value="MraZ_sf"/>
</dbReference>
<dbReference type="InterPro" id="IPR007159">
    <property type="entry name" value="SpoVT-AbrB_dom"/>
</dbReference>
<dbReference type="InterPro" id="IPR037914">
    <property type="entry name" value="SpoVT-AbrB_sf"/>
</dbReference>
<dbReference type="NCBIfam" id="TIGR00242">
    <property type="entry name" value="division/cell wall cluster transcriptional repressor MraZ"/>
    <property type="match status" value="1"/>
</dbReference>
<dbReference type="PANTHER" id="PTHR34701">
    <property type="entry name" value="TRANSCRIPTIONAL REGULATOR MRAZ"/>
    <property type="match status" value="1"/>
</dbReference>
<dbReference type="PANTHER" id="PTHR34701:SF1">
    <property type="entry name" value="TRANSCRIPTIONAL REGULATOR MRAZ"/>
    <property type="match status" value="1"/>
</dbReference>
<dbReference type="Pfam" id="PF02381">
    <property type="entry name" value="MraZ"/>
    <property type="match status" value="2"/>
</dbReference>
<dbReference type="SUPFAM" id="SSF89447">
    <property type="entry name" value="AbrB/MazE/MraZ-like"/>
    <property type="match status" value="1"/>
</dbReference>
<dbReference type="PROSITE" id="PS51740">
    <property type="entry name" value="SPOVT_ABRB"/>
    <property type="match status" value="2"/>
</dbReference>
<feature type="chain" id="PRO_1000148853" description="Transcriptional regulator MraZ">
    <location>
        <begin position="1"/>
        <end position="142"/>
    </location>
</feature>
<feature type="domain" description="SpoVT-AbrB 1" evidence="2">
    <location>
        <begin position="5"/>
        <end position="51"/>
    </location>
</feature>
<feature type="domain" description="SpoVT-AbrB 2" evidence="2">
    <location>
        <begin position="77"/>
        <end position="120"/>
    </location>
</feature>
<proteinExistence type="inferred from homology"/>
<comment type="subunit">
    <text evidence="1">Forms oligomers.</text>
</comment>
<comment type="subcellular location">
    <subcellularLocation>
        <location evidence="1">Cytoplasm</location>
        <location evidence="1">Nucleoid</location>
    </subcellularLocation>
</comment>
<comment type="similarity">
    <text evidence="1">Belongs to the MraZ family.</text>
</comment>
<keyword id="KW-0963">Cytoplasm</keyword>
<keyword id="KW-0238">DNA-binding</keyword>
<keyword id="KW-1185">Reference proteome</keyword>
<keyword id="KW-0677">Repeat</keyword>
<keyword id="KW-0804">Transcription</keyword>
<keyword id="KW-0805">Transcription regulation</keyword>
<accession>B9MFS1</accession>
<protein>
    <recommendedName>
        <fullName>Transcriptional regulator MraZ</fullName>
    </recommendedName>
</protein>
<name>MRAZ_ACIET</name>
<evidence type="ECO:0000255" key="1">
    <source>
        <dbReference type="HAMAP-Rule" id="MF_01008"/>
    </source>
</evidence>
<evidence type="ECO:0000255" key="2">
    <source>
        <dbReference type="PROSITE-ProRule" id="PRU01076"/>
    </source>
</evidence>
<reference key="1">
    <citation type="submission" date="2009-01" db="EMBL/GenBank/DDBJ databases">
        <title>Complete sequence of Diaphorobacter sp. TPSY.</title>
        <authorList>
            <consortium name="US DOE Joint Genome Institute"/>
            <person name="Lucas S."/>
            <person name="Copeland A."/>
            <person name="Lapidus A."/>
            <person name="Glavina del Rio T."/>
            <person name="Tice H."/>
            <person name="Bruce D."/>
            <person name="Goodwin L."/>
            <person name="Pitluck S."/>
            <person name="Chertkov O."/>
            <person name="Brettin T."/>
            <person name="Detter J.C."/>
            <person name="Han C."/>
            <person name="Larimer F."/>
            <person name="Land M."/>
            <person name="Hauser L."/>
            <person name="Kyrpides N."/>
            <person name="Mikhailova N."/>
            <person name="Coates J.D."/>
        </authorList>
    </citation>
    <scope>NUCLEOTIDE SEQUENCE [LARGE SCALE GENOMIC DNA]</scope>
    <source>
        <strain>TPSY</strain>
    </source>
</reference>
<sequence length="142" mass="15873">MFQGASSLSLDAKGRLSVPTRHRDALTAQAGGQLTLTKHPDGCLMVFPRPEWEKFRERIAQLPMSAQWWKRIFLGNAMDVEMDGTGRVLVSPELREAAGLSKDAILLGMGNHFELWDKATYEAKEAAAMQAEMPDVFKDFSF</sequence>